<evidence type="ECO:0000255" key="1">
    <source>
        <dbReference type="HAMAP-Rule" id="MF_01220"/>
    </source>
</evidence>
<organism>
    <name type="scientific">Rhizobium etli (strain ATCC 51251 / DSM 11541 / JCM 21823 / NBRC 15573 / CFN 42)</name>
    <dbReference type="NCBI Taxonomy" id="347834"/>
    <lineage>
        <taxon>Bacteria</taxon>
        <taxon>Pseudomonadati</taxon>
        <taxon>Pseudomonadota</taxon>
        <taxon>Alphaproteobacteria</taxon>
        <taxon>Hyphomicrobiales</taxon>
        <taxon>Rhizobiaceae</taxon>
        <taxon>Rhizobium/Agrobacterium group</taxon>
        <taxon>Rhizobium</taxon>
    </lineage>
</organism>
<sequence>MSLEPVYKRVLLKASGEALMGAQGFGIDVTVADRIASDIAEARHMGVEVGVVVGGGNIFRGVAVASKGGDRVTGDHMGMLGTIINALALATSLRKLNIDTVVLSAISMPEICESFSQRATLYHLSMGRVVIFAGGTGNPFFTTDSAAALRAAEMGAQAIFKGTQVDGIYTADPKKYPDATRFDRLTHQEVLDRGLAVMDVAAVALARENSIPIIVFSIHEKGGFAEILTGGGLKTIVSDN</sequence>
<dbReference type="EC" id="2.7.4.22" evidence="1"/>
<dbReference type="EMBL" id="CP000133">
    <property type="protein sequence ID" value="ABC90701.1"/>
    <property type="molecule type" value="Genomic_DNA"/>
</dbReference>
<dbReference type="RefSeq" id="WP_011425194.1">
    <property type="nucleotide sequence ID" value="NC_007761.1"/>
</dbReference>
<dbReference type="SMR" id="Q2K8Y5"/>
<dbReference type="KEGG" id="ret:RHE_CH01915"/>
<dbReference type="eggNOG" id="COG0528">
    <property type="taxonomic scope" value="Bacteria"/>
</dbReference>
<dbReference type="HOGENOM" id="CLU_033861_0_0_5"/>
<dbReference type="OrthoDB" id="9807458at2"/>
<dbReference type="UniPathway" id="UPA00159">
    <property type="reaction ID" value="UER00275"/>
</dbReference>
<dbReference type="Proteomes" id="UP000001936">
    <property type="component" value="Chromosome"/>
</dbReference>
<dbReference type="GO" id="GO:0005829">
    <property type="term" value="C:cytosol"/>
    <property type="evidence" value="ECO:0007669"/>
    <property type="project" value="TreeGrafter"/>
</dbReference>
<dbReference type="GO" id="GO:0005524">
    <property type="term" value="F:ATP binding"/>
    <property type="evidence" value="ECO:0007669"/>
    <property type="project" value="UniProtKB-KW"/>
</dbReference>
<dbReference type="GO" id="GO:0033862">
    <property type="term" value="F:UMP kinase activity"/>
    <property type="evidence" value="ECO:0007669"/>
    <property type="project" value="UniProtKB-EC"/>
</dbReference>
<dbReference type="GO" id="GO:0044210">
    <property type="term" value="P:'de novo' CTP biosynthetic process"/>
    <property type="evidence" value="ECO:0007669"/>
    <property type="project" value="UniProtKB-UniRule"/>
</dbReference>
<dbReference type="GO" id="GO:0006225">
    <property type="term" value="P:UDP biosynthetic process"/>
    <property type="evidence" value="ECO:0007669"/>
    <property type="project" value="TreeGrafter"/>
</dbReference>
<dbReference type="CDD" id="cd04254">
    <property type="entry name" value="AAK_UMPK-PyrH-Ec"/>
    <property type="match status" value="1"/>
</dbReference>
<dbReference type="FunFam" id="3.40.1160.10:FF:000001">
    <property type="entry name" value="Uridylate kinase"/>
    <property type="match status" value="1"/>
</dbReference>
<dbReference type="Gene3D" id="3.40.1160.10">
    <property type="entry name" value="Acetylglutamate kinase-like"/>
    <property type="match status" value="1"/>
</dbReference>
<dbReference type="HAMAP" id="MF_01220_B">
    <property type="entry name" value="PyrH_B"/>
    <property type="match status" value="1"/>
</dbReference>
<dbReference type="InterPro" id="IPR036393">
    <property type="entry name" value="AceGlu_kinase-like_sf"/>
</dbReference>
<dbReference type="InterPro" id="IPR001048">
    <property type="entry name" value="Asp/Glu/Uridylate_kinase"/>
</dbReference>
<dbReference type="InterPro" id="IPR011817">
    <property type="entry name" value="Uridylate_kinase"/>
</dbReference>
<dbReference type="InterPro" id="IPR015963">
    <property type="entry name" value="Uridylate_kinase_bac"/>
</dbReference>
<dbReference type="NCBIfam" id="TIGR02075">
    <property type="entry name" value="pyrH_bact"/>
    <property type="match status" value="1"/>
</dbReference>
<dbReference type="PANTHER" id="PTHR42833">
    <property type="entry name" value="URIDYLATE KINASE"/>
    <property type="match status" value="1"/>
</dbReference>
<dbReference type="PANTHER" id="PTHR42833:SF4">
    <property type="entry name" value="URIDYLATE KINASE PUMPKIN, CHLOROPLASTIC"/>
    <property type="match status" value="1"/>
</dbReference>
<dbReference type="Pfam" id="PF00696">
    <property type="entry name" value="AA_kinase"/>
    <property type="match status" value="1"/>
</dbReference>
<dbReference type="PIRSF" id="PIRSF005650">
    <property type="entry name" value="Uridylate_kin"/>
    <property type="match status" value="1"/>
</dbReference>
<dbReference type="SUPFAM" id="SSF53633">
    <property type="entry name" value="Carbamate kinase-like"/>
    <property type="match status" value="1"/>
</dbReference>
<name>PYRH_RHIEC</name>
<protein>
    <recommendedName>
        <fullName evidence="1">Uridylate kinase</fullName>
        <shortName evidence="1">UK</shortName>
        <ecNumber evidence="1">2.7.4.22</ecNumber>
    </recommendedName>
    <alternativeName>
        <fullName evidence="1">Uridine monophosphate kinase</fullName>
        <shortName evidence="1">UMP kinase</shortName>
        <shortName evidence="1">UMPK</shortName>
    </alternativeName>
</protein>
<reference key="1">
    <citation type="journal article" date="2006" name="Proc. Natl. Acad. Sci. U.S.A.">
        <title>The partitioned Rhizobium etli genome: genetic and metabolic redundancy in seven interacting replicons.</title>
        <authorList>
            <person name="Gonzalez V."/>
            <person name="Santamaria R.I."/>
            <person name="Bustos P."/>
            <person name="Hernandez-Gonzalez I."/>
            <person name="Medrano-Soto A."/>
            <person name="Moreno-Hagelsieb G."/>
            <person name="Janga S.C."/>
            <person name="Ramirez M.A."/>
            <person name="Jimenez-Jacinto V."/>
            <person name="Collado-Vides J."/>
            <person name="Davila G."/>
        </authorList>
    </citation>
    <scope>NUCLEOTIDE SEQUENCE [LARGE SCALE GENOMIC DNA]</scope>
    <source>
        <strain>ATCC 51251 / DSM 11541 / JCM 21823 / NBRC 15573 / CFN 42</strain>
    </source>
</reference>
<gene>
    <name evidence="1" type="primary">pyrH</name>
    <name type="ordered locus">RHE_CH01915</name>
</gene>
<accession>Q2K8Y5</accession>
<comment type="function">
    <text evidence="1">Catalyzes the reversible phosphorylation of UMP to UDP.</text>
</comment>
<comment type="catalytic activity">
    <reaction evidence="1">
        <text>UMP + ATP = UDP + ADP</text>
        <dbReference type="Rhea" id="RHEA:24400"/>
        <dbReference type="ChEBI" id="CHEBI:30616"/>
        <dbReference type="ChEBI" id="CHEBI:57865"/>
        <dbReference type="ChEBI" id="CHEBI:58223"/>
        <dbReference type="ChEBI" id="CHEBI:456216"/>
        <dbReference type="EC" id="2.7.4.22"/>
    </reaction>
</comment>
<comment type="activity regulation">
    <text evidence="1">Allosterically activated by GTP. Inhibited by UTP.</text>
</comment>
<comment type="pathway">
    <text evidence="1">Pyrimidine metabolism; CTP biosynthesis via de novo pathway; UDP from UMP (UMPK route): step 1/1.</text>
</comment>
<comment type="subunit">
    <text evidence="1">Homohexamer.</text>
</comment>
<comment type="subcellular location">
    <subcellularLocation>
        <location evidence="1">Cytoplasm</location>
    </subcellularLocation>
</comment>
<comment type="similarity">
    <text evidence="1">Belongs to the UMP kinase family.</text>
</comment>
<feature type="chain" id="PRO_1000053995" description="Uridylate kinase">
    <location>
        <begin position="1"/>
        <end position="240"/>
    </location>
</feature>
<feature type="region of interest" description="Involved in allosteric activation by GTP" evidence="1">
    <location>
        <begin position="21"/>
        <end position="26"/>
    </location>
</feature>
<feature type="binding site" evidence="1">
    <location>
        <begin position="13"/>
        <end position="16"/>
    </location>
    <ligand>
        <name>ATP</name>
        <dbReference type="ChEBI" id="CHEBI:30616"/>
    </ligand>
</feature>
<feature type="binding site" evidence="1">
    <location>
        <position position="55"/>
    </location>
    <ligand>
        <name>UMP</name>
        <dbReference type="ChEBI" id="CHEBI:57865"/>
    </ligand>
</feature>
<feature type="binding site" evidence="1">
    <location>
        <position position="56"/>
    </location>
    <ligand>
        <name>ATP</name>
        <dbReference type="ChEBI" id="CHEBI:30616"/>
    </ligand>
</feature>
<feature type="binding site" evidence="1">
    <location>
        <position position="60"/>
    </location>
    <ligand>
        <name>ATP</name>
        <dbReference type="ChEBI" id="CHEBI:30616"/>
    </ligand>
</feature>
<feature type="binding site" evidence="1">
    <location>
        <position position="75"/>
    </location>
    <ligand>
        <name>UMP</name>
        <dbReference type="ChEBI" id="CHEBI:57865"/>
    </ligand>
</feature>
<feature type="binding site" evidence="1">
    <location>
        <begin position="136"/>
        <end position="143"/>
    </location>
    <ligand>
        <name>UMP</name>
        <dbReference type="ChEBI" id="CHEBI:57865"/>
    </ligand>
</feature>
<feature type="binding site" evidence="1">
    <location>
        <position position="163"/>
    </location>
    <ligand>
        <name>ATP</name>
        <dbReference type="ChEBI" id="CHEBI:30616"/>
    </ligand>
</feature>
<feature type="binding site" evidence="1">
    <location>
        <position position="164"/>
    </location>
    <ligand>
        <name>ATP</name>
        <dbReference type="ChEBI" id="CHEBI:30616"/>
    </ligand>
</feature>
<feature type="binding site" evidence="1">
    <location>
        <position position="169"/>
    </location>
    <ligand>
        <name>ATP</name>
        <dbReference type="ChEBI" id="CHEBI:30616"/>
    </ligand>
</feature>
<feature type="binding site" evidence="1">
    <location>
        <position position="172"/>
    </location>
    <ligand>
        <name>ATP</name>
        <dbReference type="ChEBI" id="CHEBI:30616"/>
    </ligand>
</feature>
<proteinExistence type="inferred from homology"/>
<keyword id="KW-0021">Allosteric enzyme</keyword>
<keyword id="KW-0067">ATP-binding</keyword>
<keyword id="KW-0963">Cytoplasm</keyword>
<keyword id="KW-0418">Kinase</keyword>
<keyword id="KW-0547">Nucleotide-binding</keyword>
<keyword id="KW-0665">Pyrimidine biosynthesis</keyword>
<keyword id="KW-1185">Reference proteome</keyword>
<keyword id="KW-0808">Transferase</keyword>